<accession>Q2GH92</accession>
<dbReference type="EC" id="2.3.1.181" evidence="1"/>
<dbReference type="EMBL" id="CP000236">
    <property type="protein sequence ID" value="ABD44805.1"/>
    <property type="molecule type" value="Genomic_DNA"/>
</dbReference>
<dbReference type="RefSeq" id="WP_006009990.1">
    <property type="nucleotide sequence ID" value="NC_007799.1"/>
</dbReference>
<dbReference type="SMR" id="Q2GH92"/>
<dbReference type="STRING" id="205920.ECH_0371"/>
<dbReference type="KEGG" id="ech:ECH_0371"/>
<dbReference type="eggNOG" id="COG0321">
    <property type="taxonomic scope" value="Bacteria"/>
</dbReference>
<dbReference type="HOGENOM" id="CLU_035168_3_0_5"/>
<dbReference type="OrthoDB" id="9787061at2"/>
<dbReference type="UniPathway" id="UPA00538">
    <property type="reaction ID" value="UER00592"/>
</dbReference>
<dbReference type="Proteomes" id="UP000008320">
    <property type="component" value="Chromosome"/>
</dbReference>
<dbReference type="GO" id="GO:0005737">
    <property type="term" value="C:cytoplasm"/>
    <property type="evidence" value="ECO:0007669"/>
    <property type="project" value="UniProtKB-SubCell"/>
</dbReference>
<dbReference type="GO" id="GO:0033819">
    <property type="term" value="F:lipoyl(octanoyl) transferase activity"/>
    <property type="evidence" value="ECO:0007669"/>
    <property type="project" value="UniProtKB-EC"/>
</dbReference>
<dbReference type="GO" id="GO:0036211">
    <property type="term" value="P:protein modification process"/>
    <property type="evidence" value="ECO:0007669"/>
    <property type="project" value="InterPro"/>
</dbReference>
<dbReference type="CDD" id="cd16444">
    <property type="entry name" value="LipB"/>
    <property type="match status" value="1"/>
</dbReference>
<dbReference type="Gene3D" id="3.30.930.10">
    <property type="entry name" value="Bira Bifunctional Protein, Domain 2"/>
    <property type="match status" value="1"/>
</dbReference>
<dbReference type="HAMAP" id="MF_00013">
    <property type="entry name" value="LipB"/>
    <property type="match status" value="1"/>
</dbReference>
<dbReference type="InterPro" id="IPR045864">
    <property type="entry name" value="aa-tRNA-synth_II/BPL/LPL"/>
</dbReference>
<dbReference type="InterPro" id="IPR004143">
    <property type="entry name" value="BPL_LPL_catalytic"/>
</dbReference>
<dbReference type="InterPro" id="IPR000544">
    <property type="entry name" value="Octanoyltransferase"/>
</dbReference>
<dbReference type="InterPro" id="IPR020605">
    <property type="entry name" value="Octanoyltransferase_CS"/>
</dbReference>
<dbReference type="NCBIfam" id="TIGR00214">
    <property type="entry name" value="lipB"/>
    <property type="match status" value="1"/>
</dbReference>
<dbReference type="NCBIfam" id="NF010921">
    <property type="entry name" value="PRK14341.1"/>
    <property type="match status" value="1"/>
</dbReference>
<dbReference type="PANTHER" id="PTHR10993:SF7">
    <property type="entry name" value="LIPOYLTRANSFERASE 2, MITOCHONDRIAL-RELATED"/>
    <property type="match status" value="1"/>
</dbReference>
<dbReference type="PANTHER" id="PTHR10993">
    <property type="entry name" value="OCTANOYLTRANSFERASE"/>
    <property type="match status" value="1"/>
</dbReference>
<dbReference type="Pfam" id="PF21948">
    <property type="entry name" value="LplA-B_cat"/>
    <property type="match status" value="1"/>
</dbReference>
<dbReference type="PIRSF" id="PIRSF016262">
    <property type="entry name" value="LPLase"/>
    <property type="match status" value="1"/>
</dbReference>
<dbReference type="SUPFAM" id="SSF55681">
    <property type="entry name" value="Class II aaRS and biotin synthetases"/>
    <property type="match status" value="1"/>
</dbReference>
<dbReference type="PROSITE" id="PS51733">
    <property type="entry name" value="BPL_LPL_CATALYTIC"/>
    <property type="match status" value="1"/>
</dbReference>
<dbReference type="PROSITE" id="PS01313">
    <property type="entry name" value="LIPB"/>
    <property type="match status" value="1"/>
</dbReference>
<proteinExistence type="inferred from homology"/>
<comment type="function">
    <text evidence="1">Catalyzes the transfer of endogenously produced octanoic acid from octanoyl-acyl-carrier-protein onto the lipoyl domains of lipoate-dependent enzymes. Lipoyl-ACP can also act as a substrate although octanoyl-ACP is likely to be the physiological substrate.</text>
</comment>
<comment type="catalytic activity">
    <reaction evidence="1">
        <text>octanoyl-[ACP] + L-lysyl-[protein] = N(6)-octanoyl-L-lysyl-[protein] + holo-[ACP] + H(+)</text>
        <dbReference type="Rhea" id="RHEA:17665"/>
        <dbReference type="Rhea" id="RHEA-COMP:9636"/>
        <dbReference type="Rhea" id="RHEA-COMP:9685"/>
        <dbReference type="Rhea" id="RHEA-COMP:9752"/>
        <dbReference type="Rhea" id="RHEA-COMP:9928"/>
        <dbReference type="ChEBI" id="CHEBI:15378"/>
        <dbReference type="ChEBI" id="CHEBI:29969"/>
        <dbReference type="ChEBI" id="CHEBI:64479"/>
        <dbReference type="ChEBI" id="CHEBI:78463"/>
        <dbReference type="ChEBI" id="CHEBI:78809"/>
        <dbReference type="EC" id="2.3.1.181"/>
    </reaction>
</comment>
<comment type="pathway">
    <text evidence="1">Protein modification; protein lipoylation via endogenous pathway; protein N(6)-(lipoyl)lysine from octanoyl-[acyl-carrier-protein]: step 1/2.</text>
</comment>
<comment type="subcellular location">
    <subcellularLocation>
        <location evidence="1">Cytoplasm</location>
    </subcellularLocation>
</comment>
<comment type="miscellaneous">
    <text evidence="1">In the reaction, the free carboxyl group of octanoic acid is attached via an amide linkage to the epsilon-amino group of a specific lysine residue of lipoyl domains of lipoate-dependent enzymes.</text>
</comment>
<comment type="similarity">
    <text evidence="1">Belongs to the LipB family.</text>
</comment>
<gene>
    <name evidence="1" type="primary">lipB</name>
    <name type="ordered locus">ECH_0371</name>
</gene>
<evidence type="ECO:0000255" key="1">
    <source>
        <dbReference type="HAMAP-Rule" id="MF_00013"/>
    </source>
</evidence>
<evidence type="ECO:0000255" key="2">
    <source>
        <dbReference type="PROSITE-ProRule" id="PRU01067"/>
    </source>
</evidence>
<sequence length="214" mass="24685">MSYDLIEWKIESLQIDYQEAICFMQQRIEDIYNGVQKELVWLLEHPPLYTAGTGAKVEDLLVDNLFPVYATNRGGKYTYHGPGQRIAYVMLNLKTRNKCNIRLYVETLGNWIVETLSHFSVKSYFNPDLIGVWVTHGGTEKKIAAFGIRIRKWVTYHGVSINIDTNLSHYSGIVPCGIKDYGITSLRKLGINISYEEFDIVLQEKFNEIFSNFN</sequence>
<organism>
    <name type="scientific">Ehrlichia chaffeensis (strain ATCC CRL-10679 / Arkansas)</name>
    <dbReference type="NCBI Taxonomy" id="205920"/>
    <lineage>
        <taxon>Bacteria</taxon>
        <taxon>Pseudomonadati</taxon>
        <taxon>Pseudomonadota</taxon>
        <taxon>Alphaproteobacteria</taxon>
        <taxon>Rickettsiales</taxon>
        <taxon>Anaplasmataceae</taxon>
        <taxon>Ehrlichia</taxon>
    </lineage>
</organism>
<feature type="chain" id="PRO_0000242719" description="Octanoyltransferase">
    <location>
        <begin position="1"/>
        <end position="214"/>
    </location>
</feature>
<feature type="domain" description="BPL/LPL catalytic" evidence="2">
    <location>
        <begin position="34"/>
        <end position="214"/>
    </location>
</feature>
<feature type="active site" description="Acyl-thioester intermediate" evidence="1">
    <location>
        <position position="176"/>
    </location>
</feature>
<feature type="binding site" evidence="1">
    <location>
        <begin position="73"/>
        <end position="80"/>
    </location>
    <ligand>
        <name>substrate</name>
    </ligand>
</feature>
<feature type="binding site" evidence="1">
    <location>
        <begin position="145"/>
        <end position="147"/>
    </location>
    <ligand>
        <name>substrate</name>
    </ligand>
</feature>
<feature type="binding site" evidence="1">
    <location>
        <begin position="158"/>
        <end position="160"/>
    </location>
    <ligand>
        <name>substrate</name>
    </ligand>
</feature>
<feature type="site" description="Lowers pKa of active site Cys" evidence="1">
    <location>
        <position position="142"/>
    </location>
</feature>
<keyword id="KW-0012">Acyltransferase</keyword>
<keyword id="KW-0963">Cytoplasm</keyword>
<keyword id="KW-1185">Reference proteome</keyword>
<keyword id="KW-0808">Transferase</keyword>
<reference key="1">
    <citation type="journal article" date="2006" name="PLoS Genet.">
        <title>Comparative genomics of emerging human ehrlichiosis agents.</title>
        <authorList>
            <person name="Dunning Hotopp J.C."/>
            <person name="Lin M."/>
            <person name="Madupu R."/>
            <person name="Crabtree J."/>
            <person name="Angiuoli S.V."/>
            <person name="Eisen J.A."/>
            <person name="Seshadri R."/>
            <person name="Ren Q."/>
            <person name="Wu M."/>
            <person name="Utterback T.R."/>
            <person name="Smith S."/>
            <person name="Lewis M."/>
            <person name="Khouri H."/>
            <person name="Zhang C."/>
            <person name="Niu H."/>
            <person name="Lin Q."/>
            <person name="Ohashi N."/>
            <person name="Zhi N."/>
            <person name="Nelson W.C."/>
            <person name="Brinkac L.M."/>
            <person name="Dodson R.J."/>
            <person name="Rosovitz M.J."/>
            <person name="Sundaram J.P."/>
            <person name="Daugherty S.C."/>
            <person name="Davidsen T."/>
            <person name="Durkin A.S."/>
            <person name="Gwinn M.L."/>
            <person name="Haft D.H."/>
            <person name="Selengut J.D."/>
            <person name="Sullivan S.A."/>
            <person name="Zafar N."/>
            <person name="Zhou L."/>
            <person name="Benahmed F."/>
            <person name="Forberger H."/>
            <person name="Halpin R."/>
            <person name="Mulligan S."/>
            <person name="Robinson J."/>
            <person name="White O."/>
            <person name="Rikihisa Y."/>
            <person name="Tettelin H."/>
        </authorList>
    </citation>
    <scope>NUCLEOTIDE SEQUENCE [LARGE SCALE GENOMIC DNA]</scope>
    <source>
        <strain>ATCC CRL-10679 / Arkansas</strain>
    </source>
</reference>
<name>LIPB_EHRCR</name>
<protein>
    <recommendedName>
        <fullName evidence="1">Octanoyltransferase</fullName>
        <ecNumber evidence="1">2.3.1.181</ecNumber>
    </recommendedName>
    <alternativeName>
        <fullName evidence="1">Lipoate-protein ligase B</fullName>
    </alternativeName>
    <alternativeName>
        <fullName evidence="1">Lipoyl/octanoyl transferase</fullName>
    </alternativeName>
    <alternativeName>
        <fullName evidence="1">Octanoyl-[acyl-carrier-protein]-protein N-octanoyltransferase</fullName>
    </alternativeName>
</protein>